<comment type="function">
    <text evidence="1">Catalyzes carboxymethyl transfer from carboxy-S-adenosyl-L-methionine (Cx-SAM) to 5-hydroxyuridine (ho5U) to form 5-carboxymethoxyuridine (cmo5U) at position 34 in tRNAs.</text>
</comment>
<comment type="catalytic activity">
    <reaction evidence="1">
        <text>carboxy-S-adenosyl-L-methionine + 5-hydroxyuridine(34) in tRNA = 5-carboxymethoxyuridine(34) in tRNA + S-adenosyl-L-homocysteine + H(+)</text>
        <dbReference type="Rhea" id="RHEA:52848"/>
        <dbReference type="Rhea" id="RHEA-COMP:13381"/>
        <dbReference type="Rhea" id="RHEA-COMP:13383"/>
        <dbReference type="ChEBI" id="CHEBI:15378"/>
        <dbReference type="ChEBI" id="CHEBI:57856"/>
        <dbReference type="ChEBI" id="CHEBI:134278"/>
        <dbReference type="ChEBI" id="CHEBI:136877"/>
        <dbReference type="ChEBI" id="CHEBI:136879"/>
    </reaction>
</comment>
<comment type="subunit">
    <text evidence="1">Homotetramer.</text>
</comment>
<comment type="similarity">
    <text evidence="1">Belongs to the class I-like SAM-binding methyltransferase superfamily. CmoB family.</text>
</comment>
<dbReference type="EC" id="2.5.1.-" evidence="1"/>
<dbReference type="EMBL" id="AE001439">
    <property type="protein sequence ID" value="AAD06545.1"/>
    <property type="molecule type" value="Genomic_DNA"/>
</dbReference>
<dbReference type="PIR" id="F71867">
    <property type="entry name" value="F71867"/>
</dbReference>
<dbReference type="RefSeq" id="WP_000903873.1">
    <property type="nucleotide sequence ID" value="NC_000921.1"/>
</dbReference>
<dbReference type="SMR" id="Q9ZKH1"/>
<dbReference type="KEGG" id="hpj:jhp_0965"/>
<dbReference type="PATRIC" id="fig|85963.30.peg.1629"/>
<dbReference type="eggNOG" id="COG0500">
    <property type="taxonomic scope" value="Bacteria"/>
</dbReference>
<dbReference type="Proteomes" id="UP000000804">
    <property type="component" value="Chromosome"/>
</dbReference>
<dbReference type="GO" id="GO:0016765">
    <property type="term" value="F:transferase activity, transferring alkyl or aryl (other than methyl) groups"/>
    <property type="evidence" value="ECO:0007669"/>
    <property type="project" value="InterPro"/>
</dbReference>
<dbReference type="GO" id="GO:0002098">
    <property type="term" value="P:tRNA wobble uridine modification"/>
    <property type="evidence" value="ECO:0007669"/>
    <property type="project" value="InterPro"/>
</dbReference>
<dbReference type="CDD" id="cd02440">
    <property type="entry name" value="AdoMet_MTases"/>
    <property type="match status" value="1"/>
</dbReference>
<dbReference type="Gene3D" id="3.40.50.150">
    <property type="entry name" value="Vaccinia Virus protein VP39"/>
    <property type="match status" value="1"/>
</dbReference>
<dbReference type="HAMAP" id="MF_01590">
    <property type="entry name" value="tRNA_carboxymethyltr_CmoB"/>
    <property type="match status" value="1"/>
</dbReference>
<dbReference type="InterPro" id="IPR010017">
    <property type="entry name" value="CmoB"/>
</dbReference>
<dbReference type="InterPro" id="IPR027555">
    <property type="entry name" value="Mo5U34_MeTrfas-like"/>
</dbReference>
<dbReference type="InterPro" id="IPR029063">
    <property type="entry name" value="SAM-dependent_MTases_sf"/>
</dbReference>
<dbReference type="NCBIfam" id="NF011650">
    <property type="entry name" value="PRK15068.1"/>
    <property type="match status" value="1"/>
</dbReference>
<dbReference type="NCBIfam" id="TIGR00452">
    <property type="entry name" value="tRNA 5-methoxyuridine(34)/uridine 5-oxyacetic acid(34) synthase CmoB"/>
    <property type="match status" value="1"/>
</dbReference>
<dbReference type="Pfam" id="PF08003">
    <property type="entry name" value="Methyltransf_9"/>
    <property type="match status" value="1"/>
</dbReference>
<dbReference type="SUPFAM" id="SSF53335">
    <property type="entry name" value="S-adenosyl-L-methionine-dependent methyltransferases"/>
    <property type="match status" value="1"/>
</dbReference>
<name>CMOB_HELPJ</name>
<evidence type="ECO:0000255" key="1">
    <source>
        <dbReference type="HAMAP-Rule" id="MF_01590"/>
    </source>
</evidence>
<accession>Q9ZKH1</accession>
<proteinExistence type="inferred from homology"/>
<protein>
    <recommendedName>
        <fullName evidence="1">tRNA U34 carboxymethyltransferase</fullName>
        <ecNumber evidence="1">2.5.1.-</ecNumber>
    </recommendedName>
</protein>
<sequence length="261" mass="30125">MLICNDKFNPKTLLEEIMALRPWRKGPFEISQIKIDSEWDSSIKWDLVKNATPLKDKVVADVGCNNGYYLFKMLEHKPKSLVGFDPGVLVKKQFEFLAPFFDKEKKIIYESLGVEDFHEKYPNAFDVIFCLGVLYHRKSPLEALKALYHALKIKGELVLDTLIIDSPLDIALCPKKTYAKMKNVYFIPSVSALKGWCERVGFENFEILSVLKTTPKEQRKTDFILGQSLEDFLDKTDHSKTLEGYDAPLRGYFKMLKPSKR</sequence>
<feature type="chain" id="PRO_0000313931" description="tRNA U34 carboxymethyltransferase">
    <location>
        <begin position="1"/>
        <end position="261"/>
    </location>
</feature>
<feature type="binding site" evidence="1">
    <location>
        <position position="25"/>
    </location>
    <ligand>
        <name>carboxy-S-adenosyl-L-methionine</name>
        <dbReference type="ChEBI" id="CHEBI:134278"/>
    </ligand>
</feature>
<feature type="binding site" evidence="1">
    <location>
        <position position="39"/>
    </location>
    <ligand>
        <name>carboxy-S-adenosyl-L-methionine</name>
        <dbReference type="ChEBI" id="CHEBI:134278"/>
    </ligand>
</feature>
<feature type="binding site" evidence="1">
    <location>
        <position position="44"/>
    </location>
    <ligand>
        <name>carboxy-S-adenosyl-L-methionine</name>
        <dbReference type="ChEBI" id="CHEBI:134278"/>
    </ligand>
</feature>
<feature type="binding site" evidence="1">
    <location>
        <position position="63"/>
    </location>
    <ligand>
        <name>carboxy-S-adenosyl-L-methionine</name>
        <dbReference type="ChEBI" id="CHEBI:134278"/>
    </ligand>
</feature>
<feature type="binding site" evidence="1">
    <location>
        <begin position="114"/>
        <end position="115"/>
    </location>
    <ligand>
        <name>carboxy-S-adenosyl-L-methionine</name>
        <dbReference type="ChEBI" id="CHEBI:134278"/>
    </ligand>
</feature>
<feature type="binding site" evidence="1">
    <location>
        <position position="135"/>
    </location>
    <ligand>
        <name>carboxy-S-adenosyl-L-methionine</name>
        <dbReference type="ChEBI" id="CHEBI:134278"/>
    </ligand>
</feature>
<feature type="binding site" evidence="1">
    <location>
        <position position="250"/>
    </location>
    <ligand>
        <name>carboxy-S-adenosyl-L-methionine</name>
        <dbReference type="ChEBI" id="CHEBI:134278"/>
    </ligand>
</feature>
<reference key="1">
    <citation type="journal article" date="1999" name="Nature">
        <title>Genomic sequence comparison of two unrelated isolates of the human gastric pathogen Helicobacter pylori.</title>
        <authorList>
            <person name="Alm R.A."/>
            <person name="Ling L.-S.L."/>
            <person name="Moir D.T."/>
            <person name="King B.L."/>
            <person name="Brown E.D."/>
            <person name="Doig P.C."/>
            <person name="Smith D.R."/>
            <person name="Noonan B."/>
            <person name="Guild B.C."/>
            <person name="deJonge B.L."/>
            <person name="Carmel G."/>
            <person name="Tummino P.J."/>
            <person name="Caruso A."/>
            <person name="Uria-Nickelsen M."/>
            <person name="Mills D.M."/>
            <person name="Ives C."/>
            <person name="Gibson R."/>
            <person name="Merberg D."/>
            <person name="Mills S.D."/>
            <person name="Jiang Q."/>
            <person name="Taylor D.E."/>
            <person name="Vovis G.F."/>
            <person name="Trust T.J."/>
        </authorList>
    </citation>
    <scope>NUCLEOTIDE SEQUENCE [LARGE SCALE GENOMIC DNA]</scope>
    <source>
        <strain>J99 / ATCC 700824</strain>
    </source>
</reference>
<gene>
    <name evidence="1" type="primary">cmoB</name>
    <name type="ordered locus">jhp_0965</name>
</gene>
<organism>
    <name type="scientific">Helicobacter pylori (strain J99 / ATCC 700824)</name>
    <name type="common">Campylobacter pylori J99</name>
    <dbReference type="NCBI Taxonomy" id="85963"/>
    <lineage>
        <taxon>Bacteria</taxon>
        <taxon>Pseudomonadati</taxon>
        <taxon>Campylobacterota</taxon>
        <taxon>Epsilonproteobacteria</taxon>
        <taxon>Campylobacterales</taxon>
        <taxon>Helicobacteraceae</taxon>
        <taxon>Helicobacter</taxon>
    </lineage>
</organism>
<keyword id="KW-0808">Transferase</keyword>
<keyword id="KW-0819">tRNA processing</keyword>